<dbReference type="EC" id="2.7.11.1"/>
<dbReference type="EMBL" id="CP017624">
    <property type="protein sequence ID" value="AOW27668.1"/>
    <property type="molecule type" value="Genomic_DNA"/>
</dbReference>
<dbReference type="RefSeq" id="XP_710294.2">
    <property type="nucleotide sequence ID" value="XM_705202.2"/>
</dbReference>
<dbReference type="SMR" id="Q59KM8"/>
<dbReference type="BioGRID" id="1231186">
    <property type="interactions" value="1"/>
</dbReference>
<dbReference type="FunCoup" id="Q59KM8">
    <property type="interactions" value="298"/>
</dbReference>
<dbReference type="STRING" id="237561.Q59KM8"/>
<dbReference type="EnsemblFungi" id="C2_06670C_A-T">
    <property type="protein sequence ID" value="C2_06670C_A-T-p1"/>
    <property type="gene ID" value="C2_06670C_A"/>
</dbReference>
<dbReference type="GeneID" id="3648101"/>
<dbReference type="KEGG" id="cal:CAALFM_C206670CA"/>
<dbReference type="CGD" id="CAL0000197161">
    <property type="gene designation" value="DBF2"/>
</dbReference>
<dbReference type="VEuPathDB" id="FungiDB:C2_06670C_A"/>
<dbReference type="eggNOG" id="KOG0605">
    <property type="taxonomic scope" value="Eukaryota"/>
</dbReference>
<dbReference type="HOGENOM" id="CLU_000288_67_4_1"/>
<dbReference type="InParanoid" id="Q59KM8"/>
<dbReference type="OrthoDB" id="18472at2759"/>
<dbReference type="PRO" id="PR:Q59KM8"/>
<dbReference type="Proteomes" id="UP000000559">
    <property type="component" value="Chromosome 2"/>
</dbReference>
<dbReference type="GO" id="GO:0030428">
    <property type="term" value="C:cell septum"/>
    <property type="evidence" value="ECO:0000314"/>
    <property type="project" value="CGD"/>
</dbReference>
<dbReference type="GO" id="GO:0005935">
    <property type="term" value="C:cellular bud neck"/>
    <property type="evidence" value="ECO:0007669"/>
    <property type="project" value="UniProtKB-SubCell"/>
</dbReference>
<dbReference type="GO" id="GO:0005737">
    <property type="term" value="C:cytoplasm"/>
    <property type="evidence" value="ECO:0007669"/>
    <property type="project" value="UniProtKB-KW"/>
</dbReference>
<dbReference type="GO" id="GO:0005634">
    <property type="term" value="C:nucleus"/>
    <property type="evidence" value="ECO:0007669"/>
    <property type="project" value="UniProtKB-SubCell"/>
</dbReference>
<dbReference type="GO" id="GO:0005819">
    <property type="term" value="C:spindle"/>
    <property type="evidence" value="ECO:0007669"/>
    <property type="project" value="UniProtKB-SubCell"/>
</dbReference>
<dbReference type="GO" id="GO:0005816">
    <property type="term" value="C:spindle pole body"/>
    <property type="evidence" value="ECO:0000314"/>
    <property type="project" value="CGD"/>
</dbReference>
<dbReference type="GO" id="GO:0005524">
    <property type="term" value="F:ATP binding"/>
    <property type="evidence" value="ECO:0007669"/>
    <property type="project" value="UniProtKB-KW"/>
</dbReference>
<dbReference type="GO" id="GO:0106310">
    <property type="term" value="F:protein serine kinase activity"/>
    <property type="evidence" value="ECO:0007669"/>
    <property type="project" value="RHEA"/>
</dbReference>
<dbReference type="GO" id="GO:0004674">
    <property type="term" value="F:protein serine/threonine kinase activity"/>
    <property type="evidence" value="ECO:0000247"/>
    <property type="project" value="CGD"/>
</dbReference>
<dbReference type="GO" id="GO:0051301">
    <property type="term" value="P:cell division"/>
    <property type="evidence" value="ECO:0007669"/>
    <property type="project" value="UniProtKB-KW"/>
</dbReference>
<dbReference type="GO" id="GO:0030448">
    <property type="term" value="P:hyphal growth"/>
    <property type="evidence" value="ECO:0000315"/>
    <property type="project" value="CGD"/>
</dbReference>
<dbReference type="GO" id="GO:0035556">
    <property type="term" value="P:intracellular signal transduction"/>
    <property type="evidence" value="ECO:0000318"/>
    <property type="project" value="GO_Central"/>
</dbReference>
<dbReference type="GO" id="GO:0007052">
    <property type="term" value="P:mitotic spindle organization"/>
    <property type="evidence" value="ECO:0000315"/>
    <property type="project" value="CGD"/>
</dbReference>
<dbReference type="GO" id="GO:0007096">
    <property type="term" value="P:regulation of exit from mitosis"/>
    <property type="evidence" value="ECO:0000315"/>
    <property type="project" value="CGD"/>
</dbReference>
<dbReference type="FunFam" id="1.10.510.10:FF:000141">
    <property type="entry name" value="Non-specific serine/threonine protein kinase"/>
    <property type="match status" value="1"/>
</dbReference>
<dbReference type="FunFam" id="1.10.510.10:FF:000319">
    <property type="entry name" value="Non-specific serine/threonine protein kinase"/>
    <property type="match status" value="1"/>
</dbReference>
<dbReference type="FunFam" id="3.30.200.20:FF:000109">
    <property type="entry name" value="Non-specific serine/threonine protein kinase"/>
    <property type="match status" value="1"/>
</dbReference>
<dbReference type="Gene3D" id="3.30.200.20">
    <property type="entry name" value="Phosphorylase Kinase, domain 1"/>
    <property type="match status" value="2"/>
</dbReference>
<dbReference type="Gene3D" id="1.10.510.10">
    <property type="entry name" value="Transferase(Phosphotransferase) domain 1"/>
    <property type="match status" value="2"/>
</dbReference>
<dbReference type="InterPro" id="IPR000961">
    <property type="entry name" value="AGC-kinase_C"/>
</dbReference>
<dbReference type="InterPro" id="IPR011009">
    <property type="entry name" value="Kinase-like_dom_sf"/>
</dbReference>
<dbReference type="InterPro" id="IPR000719">
    <property type="entry name" value="Prot_kinase_dom"/>
</dbReference>
<dbReference type="InterPro" id="IPR017441">
    <property type="entry name" value="Protein_kinase_ATP_BS"/>
</dbReference>
<dbReference type="InterPro" id="IPR008271">
    <property type="entry name" value="Ser/Thr_kinase_AS"/>
</dbReference>
<dbReference type="InterPro" id="IPR050236">
    <property type="entry name" value="Ser_Thr_kinase_AGC"/>
</dbReference>
<dbReference type="PANTHER" id="PTHR24356:SF417">
    <property type="entry name" value="CELL CYCLE PROTEIN KINASE DBF2-RELATED"/>
    <property type="match status" value="1"/>
</dbReference>
<dbReference type="PANTHER" id="PTHR24356">
    <property type="entry name" value="SERINE/THREONINE-PROTEIN KINASE"/>
    <property type="match status" value="1"/>
</dbReference>
<dbReference type="Pfam" id="PF00069">
    <property type="entry name" value="Pkinase"/>
    <property type="match status" value="2"/>
</dbReference>
<dbReference type="SMART" id="SM00133">
    <property type="entry name" value="S_TK_X"/>
    <property type="match status" value="1"/>
</dbReference>
<dbReference type="SMART" id="SM00220">
    <property type="entry name" value="S_TKc"/>
    <property type="match status" value="1"/>
</dbReference>
<dbReference type="SUPFAM" id="SSF56112">
    <property type="entry name" value="Protein kinase-like (PK-like)"/>
    <property type="match status" value="1"/>
</dbReference>
<dbReference type="PROSITE" id="PS51285">
    <property type="entry name" value="AGC_KINASE_CTER"/>
    <property type="match status" value="1"/>
</dbReference>
<dbReference type="PROSITE" id="PS00107">
    <property type="entry name" value="PROTEIN_KINASE_ATP"/>
    <property type="match status" value="1"/>
</dbReference>
<dbReference type="PROSITE" id="PS50011">
    <property type="entry name" value="PROTEIN_KINASE_DOM"/>
    <property type="match status" value="1"/>
</dbReference>
<dbReference type="PROSITE" id="PS00108">
    <property type="entry name" value="PROTEIN_KINASE_ST"/>
    <property type="match status" value="1"/>
</dbReference>
<evidence type="ECO:0000255" key="1">
    <source>
        <dbReference type="PROSITE-ProRule" id="PRU00159"/>
    </source>
</evidence>
<evidence type="ECO:0000255" key="2">
    <source>
        <dbReference type="PROSITE-ProRule" id="PRU00618"/>
    </source>
</evidence>
<evidence type="ECO:0000255" key="3">
    <source>
        <dbReference type="PROSITE-ProRule" id="PRU10027"/>
    </source>
</evidence>
<evidence type="ECO:0000256" key="4">
    <source>
        <dbReference type="SAM" id="MobiDB-lite"/>
    </source>
</evidence>
<evidence type="ECO:0000269" key="5">
    <source>
    </source>
</evidence>
<evidence type="ECO:0000269" key="6">
    <source>
    </source>
</evidence>
<proteinExistence type="evidence at transcript level"/>
<accession>Q59KM8</accession>
<accession>A0A1D8PHQ1</accession>
<name>DBF2_CANAL</name>
<gene>
    <name type="primary">DBF2</name>
    <name type="ordered locus">CAALFM_C206670CA</name>
    <name type="ORF">CaO19.1223</name>
    <name type="ORF">CaO19.8809</name>
</gene>
<comment type="function">
    <text evidence="5">Ser/Thr-protein kinase involved in the mitotic exit network (MEN) and required after the metaphase to anaphase cell cycle transition. Required for proper nuclear segregation, mitotic spindle organization, actomyosin ring contraction, primary septum assembly, and normal hyphal morphogenesis.</text>
</comment>
<comment type="catalytic activity">
    <reaction>
        <text>L-seryl-[protein] + ATP = O-phospho-L-seryl-[protein] + ADP + H(+)</text>
        <dbReference type="Rhea" id="RHEA:17989"/>
        <dbReference type="Rhea" id="RHEA-COMP:9863"/>
        <dbReference type="Rhea" id="RHEA-COMP:11604"/>
        <dbReference type="ChEBI" id="CHEBI:15378"/>
        <dbReference type="ChEBI" id="CHEBI:29999"/>
        <dbReference type="ChEBI" id="CHEBI:30616"/>
        <dbReference type="ChEBI" id="CHEBI:83421"/>
        <dbReference type="ChEBI" id="CHEBI:456216"/>
        <dbReference type="EC" id="2.7.11.1"/>
    </reaction>
</comment>
<comment type="catalytic activity">
    <reaction>
        <text>L-threonyl-[protein] + ATP = O-phospho-L-threonyl-[protein] + ADP + H(+)</text>
        <dbReference type="Rhea" id="RHEA:46608"/>
        <dbReference type="Rhea" id="RHEA-COMP:11060"/>
        <dbReference type="Rhea" id="RHEA-COMP:11605"/>
        <dbReference type="ChEBI" id="CHEBI:15378"/>
        <dbReference type="ChEBI" id="CHEBI:30013"/>
        <dbReference type="ChEBI" id="CHEBI:30616"/>
        <dbReference type="ChEBI" id="CHEBI:61977"/>
        <dbReference type="ChEBI" id="CHEBI:456216"/>
        <dbReference type="EC" id="2.7.11.1"/>
    </reaction>
</comment>
<comment type="subcellular location">
    <subcellularLocation>
        <location evidence="5">Cytoplasm</location>
        <location evidence="5">Cytoskeleton</location>
        <location evidence="5">Microtubule organizing center</location>
        <location evidence="5">Spindle pole body</location>
    </subcellularLocation>
    <subcellularLocation>
        <location evidence="5">Cytoplasm</location>
        <location evidence="5">Cytoskeleton</location>
        <location evidence="5">Spindle</location>
    </subcellularLocation>
    <subcellularLocation>
        <location evidence="5">Nucleus</location>
    </subcellularLocation>
    <subcellularLocation>
        <location evidence="5">Bud neck</location>
    </subcellularLocation>
    <text>In small unbudded G1 cells, localizes to the spindle pole body (SPB). At the G1/S transition, remains associated with the SPB but also starts to accumulate in a linear structure in the nuclei of the cells. During mitosis, a very faint signal along the mother-bud axis is observed, suggesting association with the mitotic spindle during this part of the cell cycle. Finally, localizes to the bud neck at the end of mitosis and cytokinesis.</text>
</comment>
<comment type="induction">
    <text evidence="6">Cell cycle-regulated with a peak during M/G1.</text>
</comment>
<comment type="disruption phenotype">
    <text evidence="5">Leads to inviable cells.</text>
</comment>
<comment type="similarity">
    <text evidence="1">Belongs to the protein kinase superfamily. Ser/Thr protein kinase family.</text>
</comment>
<keyword id="KW-0067">ATP-binding</keyword>
<keyword id="KW-0131">Cell cycle</keyword>
<keyword id="KW-0132">Cell division</keyword>
<keyword id="KW-0963">Cytoplasm</keyword>
<keyword id="KW-0206">Cytoskeleton</keyword>
<keyword id="KW-0418">Kinase</keyword>
<keyword id="KW-0547">Nucleotide-binding</keyword>
<keyword id="KW-0539">Nucleus</keyword>
<keyword id="KW-0597">Phosphoprotein</keyword>
<keyword id="KW-1185">Reference proteome</keyword>
<keyword id="KW-0723">Serine/threonine-protein kinase</keyword>
<keyword id="KW-0808">Transferase</keyword>
<protein>
    <recommendedName>
        <fullName>Cell cycle protein kinase DBF2</fullName>
        <ecNumber>2.7.11.1</ecNumber>
    </recommendedName>
    <alternativeName>
        <fullName>Dumbbell forming protein 2</fullName>
    </alternativeName>
</protein>
<feature type="chain" id="PRO_0000425151" description="Cell cycle protein kinase DBF2">
    <location>
        <begin position="1"/>
        <end position="710"/>
    </location>
</feature>
<feature type="domain" description="Protein kinase" evidence="1">
    <location>
        <begin position="240"/>
        <end position="557"/>
    </location>
</feature>
<feature type="domain" description="AGC-kinase C-terminal" evidence="2">
    <location>
        <begin position="559"/>
        <end position="658"/>
    </location>
</feature>
<feature type="region of interest" description="Disordered" evidence="4">
    <location>
        <begin position="1"/>
        <end position="20"/>
    </location>
</feature>
<feature type="region of interest" description="Disordered" evidence="4">
    <location>
        <begin position="46"/>
        <end position="103"/>
    </location>
</feature>
<feature type="region of interest" description="Disordered" evidence="4">
    <location>
        <begin position="613"/>
        <end position="636"/>
    </location>
</feature>
<feature type="region of interest" description="Disordered" evidence="4">
    <location>
        <begin position="651"/>
        <end position="674"/>
    </location>
</feature>
<feature type="compositionally biased region" description="Basic residues" evidence="4">
    <location>
        <begin position="8"/>
        <end position="17"/>
    </location>
</feature>
<feature type="compositionally biased region" description="Polar residues" evidence="4">
    <location>
        <begin position="46"/>
        <end position="57"/>
    </location>
</feature>
<feature type="compositionally biased region" description="Low complexity" evidence="4">
    <location>
        <begin position="58"/>
        <end position="70"/>
    </location>
</feature>
<feature type="compositionally biased region" description="Polar residues" evidence="4">
    <location>
        <begin position="71"/>
        <end position="103"/>
    </location>
</feature>
<feature type="compositionally biased region" description="Low complexity" evidence="4">
    <location>
        <begin position="617"/>
        <end position="627"/>
    </location>
</feature>
<feature type="compositionally biased region" description="Gly residues" evidence="4">
    <location>
        <begin position="663"/>
        <end position="672"/>
    </location>
</feature>
<feature type="active site" description="Proton acceptor" evidence="1 3">
    <location>
        <position position="363"/>
    </location>
</feature>
<feature type="binding site" evidence="1">
    <location>
        <begin position="246"/>
        <end position="254"/>
    </location>
    <ligand>
        <name>ATP</name>
        <dbReference type="ChEBI" id="CHEBI:30616"/>
    </ligand>
</feature>
<feature type="binding site" evidence="1">
    <location>
        <position position="269"/>
    </location>
    <ligand>
        <name>ATP</name>
        <dbReference type="ChEBI" id="CHEBI:30616"/>
    </ligand>
</feature>
<feature type="binding site" evidence="1">
    <location>
        <begin position="696"/>
        <end position="703"/>
    </location>
    <ligand>
        <name>ATP</name>
        <dbReference type="ChEBI" id="CHEBI:30616"/>
    </ligand>
</feature>
<reference key="1">
    <citation type="journal article" date="2004" name="Proc. Natl. Acad. Sci. U.S.A.">
        <title>The diploid genome sequence of Candida albicans.</title>
        <authorList>
            <person name="Jones T."/>
            <person name="Federspiel N.A."/>
            <person name="Chibana H."/>
            <person name="Dungan J."/>
            <person name="Kalman S."/>
            <person name="Magee B.B."/>
            <person name="Newport G."/>
            <person name="Thorstenson Y.R."/>
            <person name="Agabian N."/>
            <person name="Magee P.T."/>
            <person name="Davis R.W."/>
            <person name="Scherer S."/>
        </authorList>
    </citation>
    <scope>NUCLEOTIDE SEQUENCE [LARGE SCALE GENOMIC DNA]</scope>
    <source>
        <strain>SC5314 / ATCC MYA-2876</strain>
    </source>
</reference>
<reference key="2">
    <citation type="journal article" date="2007" name="Genome Biol.">
        <title>Assembly of the Candida albicans genome into sixteen supercontigs aligned on the eight chromosomes.</title>
        <authorList>
            <person name="van het Hoog M."/>
            <person name="Rast T.J."/>
            <person name="Martchenko M."/>
            <person name="Grindle S."/>
            <person name="Dignard D."/>
            <person name="Hogues H."/>
            <person name="Cuomo C."/>
            <person name="Berriman M."/>
            <person name="Scherer S."/>
            <person name="Magee B.B."/>
            <person name="Whiteway M."/>
            <person name="Chibana H."/>
            <person name="Nantel A."/>
            <person name="Magee P.T."/>
        </authorList>
    </citation>
    <scope>GENOME REANNOTATION</scope>
    <source>
        <strain>SC5314 / ATCC MYA-2876</strain>
    </source>
</reference>
<reference key="3">
    <citation type="journal article" date="2013" name="Genome Biol.">
        <title>Assembly of a phased diploid Candida albicans genome facilitates allele-specific measurements and provides a simple model for repeat and indel structure.</title>
        <authorList>
            <person name="Muzzey D."/>
            <person name="Schwartz K."/>
            <person name="Weissman J.S."/>
            <person name="Sherlock G."/>
        </authorList>
    </citation>
    <scope>NUCLEOTIDE SEQUENCE [LARGE SCALE GENOMIC DNA]</scope>
    <scope>GENOME REANNOTATION</scope>
    <source>
        <strain>SC5314 / ATCC MYA-2876</strain>
    </source>
</reference>
<reference key="4">
    <citation type="journal article" date="2009" name="Mol. Biol. Cell">
        <title>Transcriptional analysis of the Candida albicans cell cycle.</title>
        <authorList>
            <person name="Cote P."/>
            <person name="Hogues H."/>
            <person name="Whiteway M."/>
        </authorList>
    </citation>
    <scope>INDUCTION</scope>
</reference>
<reference key="5">
    <citation type="journal article" date="2009" name="Mol. Microbiol.">
        <title>Dbf2 is essential for cytokinesis and correct mitotic spindle formation in Candida albicans.</title>
        <authorList>
            <person name="Gonzalez-Novo A."/>
            <person name="Labrador L."/>
            <person name="Pablo-Hernando M.E."/>
            <person name="Correa-Bordes J."/>
            <person name="Sanchez M."/>
            <person name="Jimenez J."/>
            <person name="Vazquez de Aldana C.R."/>
        </authorList>
    </citation>
    <scope>FUNCTION</scope>
    <scope>DISRUPTION PHENOTYPE</scope>
    <scope>SUBCELLULAR LOCATION</scope>
</reference>
<organism>
    <name type="scientific">Candida albicans (strain SC5314 / ATCC MYA-2876)</name>
    <name type="common">Yeast</name>
    <dbReference type="NCBI Taxonomy" id="237561"/>
    <lineage>
        <taxon>Eukaryota</taxon>
        <taxon>Fungi</taxon>
        <taxon>Dikarya</taxon>
        <taxon>Ascomycota</taxon>
        <taxon>Saccharomycotina</taxon>
        <taxon>Pichiomycetes</taxon>
        <taxon>Debaryomycetaceae</taxon>
        <taxon>Candida/Lodderomyces clade</taxon>
        <taxon>Candida</taxon>
    </lineage>
</organism>
<sequence length="710" mass="82356">MTNFFNRSPKHQSHHYQPHQQDVTDISYSMENVSISSNAMMDIDTSYRSSKPTYNNPQQQQQQQQQQQAQNNLFNKENITPLNSPTKSILHNSPQQAKSSTSPQHLYNKLVNANYNGNSPQPGIQQQQNNRALQNNINQLQPPLNKRYKLTEAEFYAKANSARTKRLTSIAQLYFLDYYCDMFDYVINRRERTAIVEKNLLTDPMYKNDITKQQFEWKNYIGRERALLRKRRLKPKHKDFEMITQIGQGGYGQVFLSRKRDTREICALKILNKKLLIKLDETRHVLTERDILTNTRSDWLVKLLYAFQDQEKVFLAMEFVPGGDFRTLLNNTGYLIPPHARFYISEMFAAVNSLHELGFTHRDLKPENFLIDSKGHIKLTDFGLAAGTVCNDRIESMKIKLQNLQNLNDFNDDSNNDNHHYQVPSSLIYERQKIFKQSQQQQQQQNSNNTTANSIVGSPDYMALEVLEGKNYNYTIDYWSLGCMLFEALCGYPPFSGSKQDETYYNLKHWKTALRRPQTKDGRYVFSDRTWNLIIKLIASPNNRLQNFKQVQQQSYFSDIKDWGNLRQKTPPFTPQLDNEEDAGYFDDFEDDEMMMKYKDVFARQEQNEQLLEKSNTTTTTTTTTTTKNGKRFSPGSKFNDNFIGFTFKHKSNPNNKFTNGSGNTGRYGNGNGNNNNNGEINLLNMVENGNGIGNGNSRSSRLNPLATLY</sequence>